<gene>
    <name evidence="1" type="primary">efp</name>
    <name type="ordered locus">Bcep18194_A4253</name>
</gene>
<keyword id="KW-0963">Cytoplasm</keyword>
<keyword id="KW-0251">Elongation factor</keyword>
<keyword id="KW-0648">Protein biosynthesis</keyword>
<proteinExistence type="inferred from homology"/>
<reference key="1">
    <citation type="submission" date="2005-10" db="EMBL/GenBank/DDBJ databases">
        <title>Complete sequence of chromosome 1 of Burkholderia sp. 383.</title>
        <authorList>
            <consortium name="US DOE Joint Genome Institute"/>
            <person name="Copeland A."/>
            <person name="Lucas S."/>
            <person name="Lapidus A."/>
            <person name="Barry K."/>
            <person name="Detter J.C."/>
            <person name="Glavina T."/>
            <person name="Hammon N."/>
            <person name="Israni S."/>
            <person name="Pitluck S."/>
            <person name="Chain P."/>
            <person name="Malfatti S."/>
            <person name="Shin M."/>
            <person name="Vergez L."/>
            <person name="Schmutz J."/>
            <person name="Larimer F."/>
            <person name="Land M."/>
            <person name="Kyrpides N."/>
            <person name="Lykidis A."/>
            <person name="Richardson P."/>
        </authorList>
    </citation>
    <scope>NUCLEOTIDE SEQUENCE [LARGE SCALE GENOMIC DNA]</scope>
    <source>
        <strain>ATCC 17760 / DSM 23089 / LMG 22485 / NCIMB 9086 / R18194 / 383</strain>
    </source>
</reference>
<evidence type="ECO:0000255" key="1">
    <source>
        <dbReference type="HAMAP-Rule" id="MF_00141"/>
    </source>
</evidence>
<organism>
    <name type="scientific">Burkholderia lata (strain ATCC 17760 / DSM 23089 / LMG 22485 / NCIMB 9086 / R18194 / 383)</name>
    <dbReference type="NCBI Taxonomy" id="482957"/>
    <lineage>
        <taxon>Bacteria</taxon>
        <taxon>Pseudomonadati</taxon>
        <taxon>Pseudomonadota</taxon>
        <taxon>Betaproteobacteria</taxon>
        <taxon>Burkholderiales</taxon>
        <taxon>Burkholderiaceae</taxon>
        <taxon>Burkholderia</taxon>
        <taxon>Burkholderia cepacia complex</taxon>
    </lineage>
</organism>
<dbReference type="EMBL" id="CP000151">
    <property type="protein sequence ID" value="ABB07850.1"/>
    <property type="molecule type" value="Genomic_DNA"/>
</dbReference>
<dbReference type="RefSeq" id="WP_011351421.1">
    <property type="nucleotide sequence ID" value="NZ_WNDV01000026.1"/>
</dbReference>
<dbReference type="SMR" id="Q39I66"/>
<dbReference type="GeneID" id="93192611"/>
<dbReference type="KEGG" id="bur:Bcep18194_A4253"/>
<dbReference type="HOGENOM" id="CLU_074944_2_1_4"/>
<dbReference type="UniPathway" id="UPA00345"/>
<dbReference type="Proteomes" id="UP000002705">
    <property type="component" value="Chromosome 1"/>
</dbReference>
<dbReference type="GO" id="GO:0005737">
    <property type="term" value="C:cytoplasm"/>
    <property type="evidence" value="ECO:0007669"/>
    <property type="project" value="UniProtKB-SubCell"/>
</dbReference>
<dbReference type="GO" id="GO:0003746">
    <property type="term" value="F:translation elongation factor activity"/>
    <property type="evidence" value="ECO:0007669"/>
    <property type="project" value="UniProtKB-UniRule"/>
</dbReference>
<dbReference type="GO" id="GO:0043043">
    <property type="term" value="P:peptide biosynthetic process"/>
    <property type="evidence" value="ECO:0007669"/>
    <property type="project" value="InterPro"/>
</dbReference>
<dbReference type="CDD" id="cd04470">
    <property type="entry name" value="S1_EF-P_repeat_1"/>
    <property type="match status" value="1"/>
</dbReference>
<dbReference type="CDD" id="cd05794">
    <property type="entry name" value="S1_EF-P_repeat_2"/>
    <property type="match status" value="1"/>
</dbReference>
<dbReference type="FunFam" id="2.30.30.30:FF:000003">
    <property type="entry name" value="Elongation factor P"/>
    <property type="match status" value="1"/>
</dbReference>
<dbReference type="FunFam" id="2.40.50.140:FF:000004">
    <property type="entry name" value="Elongation factor P"/>
    <property type="match status" value="1"/>
</dbReference>
<dbReference type="FunFam" id="2.40.50.140:FF:000009">
    <property type="entry name" value="Elongation factor P"/>
    <property type="match status" value="1"/>
</dbReference>
<dbReference type="Gene3D" id="2.30.30.30">
    <property type="match status" value="1"/>
</dbReference>
<dbReference type="Gene3D" id="2.40.50.140">
    <property type="entry name" value="Nucleic acid-binding proteins"/>
    <property type="match status" value="2"/>
</dbReference>
<dbReference type="HAMAP" id="MF_00141">
    <property type="entry name" value="EF_P"/>
    <property type="match status" value="1"/>
</dbReference>
<dbReference type="InterPro" id="IPR015365">
    <property type="entry name" value="Elong-fact-P_C"/>
</dbReference>
<dbReference type="InterPro" id="IPR012340">
    <property type="entry name" value="NA-bd_OB-fold"/>
</dbReference>
<dbReference type="InterPro" id="IPR014722">
    <property type="entry name" value="Rib_uL2_dom2"/>
</dbReference>
<dbReference type="InterPro" id="IPR020599">
    <property type="entry name" value="Transl_elong_fac_P/YeiP"/>
</dbReference>
<dbReference type="InterPro" id="IPR013185">
    <property type="entry name" value="Transl_elong_KOW-like"/>
</dbReference>
<dbReference type="InterPro" id="IPR001059">
    <property type="entry name" value="Transl_elong_P/YeiP_cen"/>
</dbReference>
<dbReference type="InterPro" id="IPR013852">
    <property type="entry name" value="Transl_elong_P/YeiP_CS"/>
</dbReference>
<dbReference type="InterPro" id="IPR011768">
    <property type="entry name" value="Transl_elongation_fac_P"/>
</dbReference>
<dbReference type="InterPro" id="IPR008991">
    <property type="entry name" value="Translation_prot_SH3-like_sf"/>
</dbReference>
<dbReference type="NCBIfam" id="TIGR00038">
    <property type="entry name" value="efp"/>
    <property type="match status" value="1"/>
</dbReference>
<dbReference type="NCBIfam" id="NF001810">
    <property type="entry name" value="PRK00529.1"/>
    <property type="match status" value="1"/>
</dbReference>
<dbReference type="PANTHER" id="PTHR30053">
    <property type="entry name" value="ELONGATION FACTOR P"/>
    <property type="match status" value="1"/>
</dbReference>
<dbReference type="PANTHER" id="PTHR30053:SF12">
    <property type="entry name" value="ELONGATION FACTOR P (EF-P) FAMILY PROTEIN"/>
    <property type="match status" value="1"/>
</dbReference>
<dbReference type="Pfam" id="PF01132">
    <property type="entry name" value="EFP"/>
    <property type="match status" value="1"/>
</dbReference>
<dbReference type="Pfam" id="PF08207">
    <property type="entry name" value="EFP_N"/>
    <property type="match status" value="1"/>
</dbReference>
<dbReference type="Pfam" id="PF09285">
    <property type="entry name" value="Elong-fact-P_C"/>
    <property type="match status" value="1"/>
</dbReference>
<dbReference type="PIRSF" id="PIRSF005901">
    <property type="entry name" value="EF-P"/>
    <property type="match status" value="1"/>
</dbReference>
<dbReference type="SMART" id="SM01185">
    <property type="entry name" value="EFP"/>
    <property type="match status" value="1"/>
</dbReference>
<dbReference type="SMART" id="SM00841">
    <property type="entry name" value="Elong-fact-P_C"/>
    <property type="match status" value="1"/>
</dbReference>
<dbReference type="SUPFAM" id="SSF50249">
    <property type="entry name" value="Nucleic acid-binding proteins"/>
    <property type="match status" value="2"/>
</dbReference>
<dbReference type="SUPFAM" id="SSF50104">
    <property type="entry name" value="Translation proteins SH3-like domain"/>
    <property type="match status" value="1"/>
</dbReference>
<dbReference type="PROSITE" id="PS01275">
    <property type="entry name" value="EFP"/>
    <property type="match status" value="1"/>
</dbReference>
<accession>Q39I66</accession>
<protein>
    <recommendedName>
        <fullName evidence="1">Elongation factor P</fullName>
        <shortName evidence="1">EF-P</shortName>
    </recommendedName>
</protein>
<comment type="function">
    <text evidence="1">Involved in peptide bond synthesis. Stimulates efficient translation and peptide-bond synthesis on native or reconstituted 70S ribosomes in vitro. Probably functions indirectly by altering the affinity of the ribosome for aminoacyl-tRNA, thus increasing their reactivity as acceptors for peptidyl transferase.</text>
</comment>
<comment type="pathway">
    <text evidence="1">Protein biosynthesis; polypeptide chain elongation.</text>
</comment>
<comment type="subcellular location">
    <subcellularLocation>
        <location evidence="1">Cytoplasm</location>
    </subcellularLocation>
</comment>
<comment type="similarity">
    <text evidence="1">Belongs to the elongation factor P family.</text>
</comment>
<name>EFP_BURL3</name>
<feature type="chain" id="PRO_1000010703" description="Elongation factor P">
    <location>
        <begin position="1"/>
        <end position="185"/>
    </location>
</feature>
<sequence length="185" mass="20776">MKTAQELRVGNVVQIGSDAWVIAKAEYNKSGRNSAVVKMKMKNLLTNAGQEAVYKADDKFDVVVLDRKEVTYSYFADPMYVFMDADYNQFEVEAEMMGEALNYLEDGMACEVVFYNEKAISVELPTVLVREITYTEPAVKGDTSSGKVLKNAKLATGFELQVPLFCNTGDKIEIDTRTNEYRSRA</sequence>